<feature type="chain" id="PRO_1000020378" description="Threonine--tRNA ligase">
    <location>
        <begin position="1"/>
        <end position="638"/>
    </location>
</feature>
<feature type="domain" description="TGS" evidence="2">
    <location>
        <begin position="1"/>
        <end position="61"/>
    </location>
</feature>
<feature type="region of interest" description="Catalytic" evidence="1">
    <location>
        <begin position="242"/>
        <end position="533"/>
    </location>
</feature>
<feature type="binding site" evidence="1">
    <location>
        <position position="333"/>
    </location>
    <ligand>
        <name>Zn(2+)</name>
        <dbReference type="ChEBI" id="CHEBI:29105"/>
    </ligand>
</feature>
<feature type="binding site" evidence="1">
    <location>
        <position position="384"/>
    </location>
    <ligand>
        <name>Zn(2+)</name>
        <dbReference type="ChEBI" id="CHEBI:29105"/>
    </ligand>
</feature>
<feature type="binding site" evidence="1">
    <location>
        <position position="510"/>
    </location>
    <ligand>
        <name>Zn(2+)</name>
        <dbReference type="ChEBI" id="CHEBI:29105"/>
    </ligand>
</feature>
<gene>
    <name evidence="1" type="primary">thrS</name>
    <name type="ordered locus">Daro_2677</name>
</gene>
<accession>Q47CM4</accession>
<protein>
    <recommendedName>
        <fullName evidence="1">Threonine--tRNA ligase</fullName>
        <ecNumber evidence="1">6.1.1.3</ecNumber>
    </recommendedName>
    <alternativeName>
        <fullName evidence="1">Threonyl-tRNA synthetase</fullName>
        <shortName evidence="1">ThrRS</shortName>
    </alternativeName>
</protein>
<dbReference type="EC" id="6.1.1.3" evidence="1"/>
<dbReference type="EMBL" id="CP000089">
    <property type="protein sequence ID" value="AAZ47407.1"/>
    <property type="molecule type" value="Genomic_DNA"/>
</dbReference>
<dbReference type="SMR" id="Q47CM4"/>
<dbReference type="STRING" id="159087.Daro_2677"/>
<dbReference type="KEGG" id="dar:Daro_2677"/>
<dbReference type="eggNOG" id="COG0441">
    <property type="taxonomic scope" value="Bacteria"/>
</dbReference>
<dbReference type="HOGENOM" id="CLU_008554_0_1_4"/>
<dbReference type="OrthoDB" id="9802304at2"/>
<dbReference type="GO" id="GO:0005829">
    <property type="term" value="C:cytosol"/>
    <property type="evidence" value="ECO:0007669"/>
    <property type="project" value="TreeGrafter"/>
</dbReference>
<dbReference type="GO" id="GO:0005524">
    <property type="term" value="F:ATP binding"/>
    <property type="evidence" value="ECO:0007669"/>
    <property type="project" value="UniProtKB-UniRule"/>
</dbReference>
<dbReference type="GO" id="GO:0046872">
    <property type="term" value="F:metal ion binding"/>
    <property type="evidence" value="ECO:0007669"/>
    <property type="project" value="UniProtKB-KW"/>
</dbReference>
<dbReference type="GO" id="GO:0004829">
    <property type="term" value="F:threonine-tRNA ligase activity"/>
    <property type="evidence" value="ECO:0007669"/>
    <property type="project" value="UniProtKB-UniRule"/>
</dbReference>
<dbReference type="GO" id="GO:0000049">
    <property type="term" value="F:tRNA binding"/>
    <property type="evidence" value="ECO:0007669"/>
    <property type="project" value="UniProtKB-KW"/>
</dbReference>
<dbReference type="GO" id="GO:0006435">
    <property type="term" value="P:threonyl-tRNA aminoacylation"/>
    <property type="evidence" value="ECO:0007669"/>
    <property type="project" value="UniProtKB-UniRule"/>
</dbReference>
<dbReference type="CDD" id="cd01667">
    <property type="entry name" value="TGS_ThrRS"/>
    <property type="match status" value="1"/>
</dbReference>
<dbReference type="CDD" id="cd00860">
    <property type="entry name" value="ThrRS_anticodon"/>
    <property type="match status" value="1"/>
</dbReference>
<dbReference type="CDD" id="cd00771">
    <property type="entry name" value="ThrRS_core"/>
    <property type="match status" value="1"/>
</dbReference>
<dbReference type="FunFam" id="3.10.20.30:FF:000005">
    <property type="entry name" value="Threonine--tRNA ligase"/>
    <property type="match status" value="1"/>
</dbReference>
<dbReference type="FunFam" id="3.30.54.20:FF:000002">
    <property type="entry name" value="Threonine--tRNA ligase"/>
    <property type="match status" value="1"/>
</dbReference>
<dbReference type="FunFam" id="3.30.930.10:FF:000002">
    <property type="entry name" value="Threonine--tRNA ligase"/>
    <property type="match status" value="1"/>
</dbReference>
<dbReference type="FunFam" id="3.40.50.800:FF:000001">
    <property type="entry name" value="Threonine--tRNA ligase"/>
    <property type="match status" value="1"/>
</dbReference>
<dbReference type="FunFam" id="3.30.980.10:FF:000005">
    <property type="entry name" value="Threonyl-tRNA synthetase, mitochondrial"/>
    <property type="match status" value="1"/>
</dbReference>
<dbReference type="Gene3D" id="3.10.20.30">
    <property type="match status" value="1"/>
</dbReference>
<dbReference type="Gene3D" id="3.30.54.20">
    <property type="match status" value="1"/>
</dbReference>
<dbReference type="Gene3D" id="3.40.50.800">
    <property type="entry name" value="Anticodon-binding domain"/>
    <property type="match status" value="1"/>
</dbReference>
<dbReference type="Gene3D" id="3.30.930.10">
    <property type="entry name" value="Bira Bifunctional Protein, Domain 2"/>
    <property type="match status" value="1"/>
</dbReference>
<dbReference type="Gene3D" id="3.30.980.10">
    <property type="entry name" value="Threonyl-trna Synthetase, Chain A, domain 2"/>
    <property type="match status" value="1"/>
</dbReference>
<dbReference type="HAMAP" id="MF_00184">
    <property type="entry name" value="Thr_tRNA_synth"/>
    <property type="match status" value="1"/>
</dbReference>
<dbReference type="InterPro" id="IPR002314">
    <property type="entry name" value="aa-tRNA-synt_IIb"/>
</dbReference>
<dbReference type="InterPro" id="IPR006195">
    <property type="entry name" value="aa-tRNA-synth_II"/>
</dbReference>
<dbReference type="InterPro" id="IPR045864">
    <property type="entry name" value="aa-tRNA-synth_II/BPL/LPL"/>
</dbReference>
<dbReference type="InterPro" id="IPR004154">
    <property type="entry name" value="Anticodon-bd"/>
</dbReference>
<dbReference type="InterPro" id="IPR036621">
    <property type="entry name" value="Anticodon-bd_dom_sf"/>
</dbReference>
<dbReference type="InterPro" id="IPR012675">
    <property type="entry name" value="Beta-grasp_dom_sf"/>
</dbReference>
<dbReference type="InterPro" id="IPR004095">
    <property type="entry name" value="TGS"/>
</dbReference>
<dbReference type="InterPro" id="IPR012676">
    <property type="entry name" value="TGS-like"/>
</dbReference>
<dbReference type="InterPro" id="IPR002320">
    <property type="entry name" value="Thr-tRNA-ligase_IIa"/>
</dbReference>
<dbReference type="InterPro" id="IPR018163">
    <property type="entry name" value="Thr/Ala-tRNA-synth_IIc_edit"/>
</dbReference>
<dbReference type="InterPro" id="IPR047246">
    <property type="entry name" value="ThrRS_anticodon"/>
</dbReference>
<dbReference type="InterPro" id="IPR033728">
    <property type="entry name" value="ThrRS_core"/>
</dbReference>
<dbReference type="InterPro" id="IPR012947">
    <property type="entry name" value="tRNA_SAD"/>
</dbReference>
<dbReference type="NCBIfam" id="TIGR00418">
    <property type="entry name" value="thrS"/>
    <property type="match status" value="1"/>
</dbReference>
<dbReference type="PANTHER" id="PTHR11451:SF44">
    <property type="entry name" value="THREONINE--TRNA LIGASE, CHLOROPLASTIC_MITOCHONDRIAL 2"/>
    <property type="match status" value="1"/>
</dbReference>
<dbReference type="PANTHER" id="PTHR11451">
    <property type="entry name" value="THREONINE-TRNA LIGASE"/>
    <property type="match status" value="1"/>
</dbReference>
<dbReference type="Pfam" id="PF03129">
    <property type="entry name" value="HGTP_anticodon"/>
    <property type="match status" value="1"/>
</dbReference>
<dbReference type="Pfam" id="PF02824">
    <property type="entry name" value="TGS"/>
    <property type="match status" value="1"/>
</dbReference>
<dbReference type="Pfam" id="PF00587">
    <property type="entry name" value="tRNA-synt_2b"/>
    <property type="match status" value="1"/>
</dbReference>
<dbReference type="Pfam" id="PF07973">
    <property type="entry name" value="tRNA_SAD"/>
    <property type="match status" value="1"/>
</dbReference>
<dbReference type="PRINTS" id="PR01047">
    <property type="entry name" value="TRNASYNTHTHR"/>
</dbReference>
<dbReference type="SMART" id="SM00863">
    <property type="entry name" value="tRNA_SAD"/>
    <property type="match status" value="1"/>
</dbReference>
<dbReference type="SUPFAM" id="SSF52954">
    <property type="entry name" value="Class II aaRS ABD-related"/>
    <property type="match status" value="1"/>
</dbReference>
<dbReference type="SUPFAM" id="SSF55681">
    <property type="entry name" value="Class II aaRS and biotin synthetases"/>
    <property type="match status" value="1"/>
</dbReference>
<dbReference type="SUPFAM" id="SSF81271">
    <property type="entry name" value="TGS-like"/>
    <property type="match status" value="1"/>
</dbReference>
<dbReference type="SUPFAM" id="SSF55186">
    <property type="entry name" value="ThrRS/AlaRS common domain"/>
    <property type="match status" value="1"/>
</dbReference>
<dbReference type="PROSITE" id="PS50862">
    <property type="entry name" value="AA_TRNA_LIGASE_II"/>
    <property type="match status" value="1"/>
</dbReference>
<dbReference type="PROSITE" id="PS51880">
    <property type="entry name" value="TGS"/>
    <property type="match status" value="1"/>
</dbReference>
<proteinExistence type="inferred from homology"/>
<name>SYT_DECAR</name>
<evidence type="ECO:0000255" key="1">
    <source>
        <dbReference type="HAMAP-Rule" id="MF_00184"/>
    </source>
</evidence>
<evidence type="ECO:0000255" key="2">
    <source>
        <dbReference type="PROSITE-ProRule" id="PRU01228"/>
    </source>
</evidence>
<sequence>MPDIKLPDGSIRSYEQAVTVAEVAASIGAGLARAALAGKIGGQLVDTSYLIEQNADLAIITERDAEGLELIRHSTAHLLAYAVKELFPEAQVTIGPVIENGFYYDFAYKRPFTPEDLVAIEKRMAELAKKDIPVSREVWARDDAVKFFLDLGEKYKAELIGAIPADQQVSLYREGDFIDLCRGPHVPTTAKLKVFKLMKVAGAYWRGDHRNEQLQRIYGTAWAKKEDLDAYLHMLEEAEKRDHRRLGKQYDLFHMQDEAPGLVFWHPKGWAIWQEIEGYMRAVYRNNGYQEVRCPQILDKSLWEKSGHWEHYKDNMFTTSSENRDYAVKPMNCPGHVQVFNAGLRSYRELPLRYGEFGSCHRNEPAGALHGLMRVRGFVQDDGHIFCTEDQIESEVTAFNALVKKVYADFGFNDVAVKLALRPDSRVGADDVWDRAEDALRQGLRASGLEWTELPGEGAFYGPKIEFHIRDAIGRSWQCGTMQVDFSMPGRLGAEYVGADDTRKVPVMLHRAILGSLERFIGILIENFAGALPLWLAPVQVVVLNISEKQADYAAEVAQKLHSAGFRAEADLRNEKITYKIREHSLNRLPYQLVVGDKEKADGLVAVRTRGGQDLGQMPVDVLIKRLQEEVVARSGTA</sequence>
<keyword id="KW-0030">Aminoacyl-tRNA synthetase</keyword>
<keyword id="KW-0067">ATP-binding</keyword>
<keyword id="KW-0963">Cytoplasm</keyword>
<keyword id="KW-0436">Ligase</keyword>
<keyword id="KW-0479">Metal-binding</keyword>
<keyword id="KW-0547">Nucleotide-binding</keyword>
<keyword id="KW-0648">Protein biosynthesis</keyword>
<keyword id="KW-0694">RNA-binding</keyword>
<keyword id="KW-0820">tRNA-binding</keyword>
<keyword id="KW-0862">Zinc</keyword>
<organism>
    <name type="scientific">Dechloromonas aromatica (strain RCB)</name>
    <dbReference type="NCBI Taxonomy" id="159087"/>
    <lineage>
        <taxon>Bacteria</taxon>
        <taxon>Pseudomonadati</taxon>
        <taxon>Pseudomonadota</taxon>
        <taxon>Betaproteobacteria</taxon>
        <taxon>Rhodocyclales</taxon>
        <taxon>Azonexaceae</taxon>
        <taxon>Dechloromonas</taxon>
    </lineage>
</organism>
<reference key="1">
    <citation type="journal article" date="2009" name="BMC Genomics">
        <title>Metabolic analysis of the soil microbe Dechloromonas aromatica str. RCB: indications of a surprisingly complex life-style and cryptic anaerobic pathways for aromatic degradation.</title>
        <authorList>
            <person name="Salinero K.K."/>
            <person name="Keller K."/>
            <person name="Feil W.S."/>
            <person name="Feil H."/>
            <person name="Trong S."/>
            <person name="Di Bartolo G."/>
            <person name="Lapidus A."/>
        </authorList>
    </citation>
    <scope>NUCLEOTIDE SEQUENCE [LARGE SCALE GENOMIC DNA]</scope>
    <source>
        <strain>RCB</strain>
    </source>
</reference>
<comment type="function">
    <text evidence="1">Catalyzes the attachment of threonine to tRNA(Thr) in a two-step reaction: L-threonine is first activated by ATP to form Thr-AMP and then transferred to the acceptor end of tRNA(Thr). Also edits incorrectly charged L-seryl-tRNA(Thr).</text>
</comment>
<comment type="catalytic activity">
    <reaction evidence="1">
        <text>tRNA(Thr) + L-threonine + ATP = L-threonyl-tRNA(Thr) + AMP + diphosphate + H(+)</text>
        <dbReference type="Rhea" id="RHEA:24624"/>
        <dbReference type="Rhea" id="RHEA-COMP:9670"/>
        <dbReference type="Rhea" id="RHEA-COMP:9704"/>
        <dbReference type="ChEBI" id="CHEBI:15378"/>
        <dbReference type="ChEBI" id="CHEBI:30616"/>
        <dbReference type="ChEBI" id="CHEBI:33019"/>
        <dbReference type="ChEBI" id="CHEBI:57926"/>
        <dbReference type="ChEBI" id="CHEBI:78442"/>
        <dbReference type="ChEBI" id="CHEBI:78534"/>
        <dbReference type="ChEBI" id="CHEBI:456215"/>
        <dbReference type="EC" id="6.1.1.3"/>
    </reaction>
</comment>
<comment type="cofactor">
    <cofactor evidence="1">
        <name>Zn(2+)</name>
        <dbReference type="ChEBI" id="CHEBI:29105"/>
    </cofactor>
    <text evidence="1">Binds 1 zinc ion per subunit.</text>
</comment>
<comment type="subunit">
    <text evidence="1">Homodimer.</text>
</comment>
<comment type="subcellular location">
    <subcellularLocation>
        <location evidence="1">Cytoplasm</location>
    </subcellularLocation>
</comment>
<comment type="similarity">
    <text evidence="1">Belongs to the class-II aminoacyl-tRNA synthetase family.</text>
</comment>